<sequence length="1014" mass="116015">MFKAVNPRQNFPQMEEDILKLWQDKGVFKKSIENRRDGKRFTLYEGPPTANGRPGIHHVLSRVFKDVIPRYKVMKGYYAPRIGGWDTHGLPVELEVEKELGFTSKNDIEKYGIAEFNARCRSSVFKYVSEWNKLTERIAYWVDLDNAYITMDNNYIESGWWALKQMWDKGLVYQGHRVTPHCPRCGTSLSSHEVAQGYKDNTEDPSVFVKFEIAKESLAKAGLAKKWAYPADKPLYLLAWTTTPWTLPANTALAVSAADQYAILDMTDYYMILAKPRLSALKLAENPVAGECLGSDLSGLFYKPLFDPREFGIPVRNMQDNSETGVSEELLYPVITTSYVSMDDGTGIVHTAPAYGELDYESGVKYGLKFVHHVDLQGRITGSYPFAGKFVKEADKDISRNLKERGLMFRNERMHHTYPFCWRCDSPLIYYAKQSWYIRTTAVRDELIKGNQQINWYPEHIKDGRFGDWLENNIDWAFSRERYWGTPVPIWRCEKCGRTECVGGIDELKAKPNFKGMQEKLDIHRPYVDEWTYDCDKCGGNMKRVTEVMDCWYDSGAMPVAQYHYPFEPESRSIAKDGRFPADYICEAVDQTRGWFYSLHAISTLIFNRPCYQNVICLGHILDERGEKMSKSRNNVIQPATVLDKYGADAVRWYFYTAAPPGNARRFSEKLVGEVTRQFLLMLWNVYSFFVTYANIDSFTPSEKYLEGEVPELDRWILSELNQLVLDVDKGLDNYDPTQAGRRIEDFVGYLSNWYVRRSRRRFWKSENDADKLSAYQALYTCLVTLSRLLAPFTPFVAEELYQNLVLSADPSALESVHLTDFPVADTALIDEQLDNEIRLVMKVSSMGRSARSKAALKVRQPLAEVRVVLASAGERTGLMRLAEQVLEELNVKALAVEEPGTVIPEKNYAASTEGAYTVAVYTGLSPELLAEGTAREIVHRLQTMRKSAGFEIADYINTHYQADEYLDSVIRMHSEYIKKETLSNQLIKGNAPEGAYAESLDIDGHSLSLWVAR</sequence>
<comment type="function">
    <text evidence="1">Catalyzes the attachment of isoleucine to tRNA(Ile). As IleRS can inadvertently accommodate and process structurally similar amino acids such as valine, to avoid such errors it has two additional distinct tRNA(Ile)-dependent editing activities. One activity is designated as 'pretransfer' editing and involves the hydrolysis of activated Val-AMP. The other activity is designated 'posttransfer' editing and involves deacylation of mischarged Val-tRNA(Ile).</text>
</comment>
<comment type="catalytic activity">
    <reaction evidence="1">
        <text>tRNA(Ile) + L-isoleucine + ATP = L-isoleucyl-tRNA(Ile) + AMP + diphosphate</text>
        <dbReference type="Rhea" id="RHEA:11060"/>
        <dbReference type="Rhea" id="RHEA-COMP:9666"/>
        <dbReference type="Rhea" id="RHEA-COMP:9695"/>
        <dbReference type="ChEBI" id="CHEBI:30616"/>
        <dbReference type="ChEBI" id="CHEBI:33019"/>
        <dbReference type="ChEBI" id="CHEBI:58045"/>
        <dbReference type="ChEBI" id="CHEBI:78442"/>
        <dbReference type="ChEBI" id="CHEBI:78528"/>
        <dbReference type="ChEBI" id="CHEBI:456215"/>
        <dbReference type="EC" id="6.1.1.5"/>
    </reaction>
</comment>
<comment type="cofactor">
    <cofactor evidence="1">
        <name>Zn(2+)</name>
        <dbReference type="ChEBI" id="CHEBI:29105"/>
    </cofactor>
</comment>
<comment type="subunit">
    <text evidence="1">Monomer.</text>
</comment>
<comment type="subcellular location">
    <subcellularLocation>
        <location evidence="1">Cytoplasm</location>
    </subcellularLocation>
</comment>
<comment type="domain">
    <text evidence="1">IleRS has two distinct active sites: one for aminoacylation and one for editing. The misactivated valine is translocated from the active site to the editing site, which sterically excludes the correctly activated isoleucine. The single editing site contains two valyl binding pockets, one specific for each substrate (Val-AMP or Val-tRNA(Ile)).</text>
</comment>
<comment type="similarity">
    <text evidence="1">Belongs to the class-I aminoacyl-tRNA synthetase family. IleS type 2 subfamily.</text>
</comment>
<reference key="1">
    <citation type="journal article" date="2005" name="Science">
        <title>Genome sequence of the PCE-dechlorinating bacterium Dehalococcoides ethenogenes.</title>
        <authorList>
            <person name="Seshadri R."/>
            <person name="Adrian L."/>
            <person name="Fouts D.E."/>
            <person name="Eisen J.A."/>
            <person name="Phillippy A.M."/>
            <person name="Methe B.A."/>
            <person name="Ward N.L."/>
            <person name="Nelson W.C."/>
            <person name="DeBoy R.T."/>
            <person name="Khouri H.M."/>
            <person name="Kolonay J.F."/>
            <person name="Dodson R.J."/>
            <person name="Daugherty S.C."/>
            <person name="Brinkac L.M."/>
            <person name="Sullivan S.A."/>
            <person name="Madupu R."/>
            <person name="Nelson K.E."/>
            <person name="Kang K.H."/>
            <person name="Impraim M."/>
            <person name="Tran K."/>
            <person name="Robinson J.M."/>
            <person name="Forberger H.A."/>
            <person name="Fraser C.M."/>
            <person name="Zinder S.H."/>
            <person name="Heidelberg J.F."/>
        </authorList>
    </citation>
    <scope>NUCLEOTIDE SEQUENCE [LARGE SCALE GENOMIC DNA]</scope>
    <source>
        <strain>ATCC BAA-2266 / KCTC 15142 / 195</strain>
    </source>
</reference>
<dbReference type="EC" id="6.1.1.5" evidence="1"/>
<dbReference type="EMBL" id="CP000027">
    <property type="protein sequence ID" value="AAW39707.1"/>
    <property type="molecule type" value="Genomic_DNA"/>
</dbReference>
<dbReference type="RefSeq" id="WP_010936733.1">
    <property type="nucleotide sequence ID" value="NC_002936.3"/>
</dbReference>
<dbReference type="SMR" id="Q3Z7P5"/>
<dbReference type="FunCoup" id="Q3Z7P5">
    <property type="interactions" value="326"/>
</dbReference>
<dbReference type="STRING" id="243164.DET1038"/>
<dbReference type="GeneID" id="3229669"/>
<dbReference type="KEGG" id="det:DET1038"/>
<dbReference type="PATRIC" id="fig|243164.10.peg.979"/>
<dbReference type="eggNOG" id="COG0060">
    <property type="taxonomic scope" value="Bacteria"/>
</dbReference>
<dbReference type="HOGENOM" id="CLU_001493_1_1_0"/>
<dbReference type="InParanoid" id="Q3Z7P5"/>
<dbReference type="Proteomes" id="UP000008289">
    <property type="component" value="Chromosome"/>
</dbReference>
<dbReference type="GO" id="GO:0005737">
    <property type="term" value="C:cytoplasm"/>
    <property type="evidence" value="ECO:0007669"/>
    <property type="project" value="UniProtKB-SubCell"/>
</dbReference>
<dbReference type="GO" id="GO:0002161">
    <property type="term" value="F:aminoacyl-tRNA deacylase activity"/>
    <property type="evidence" value="ECO:0007669"/>
    <property type="project" value="InterPro"/>
</dbReference>
<dbReference type="GO" id="GO:0005524">
    <property type="term" value="F:ATP binding"/>
    <property type="evidence" value="ECO:0007669"/>
    <property type="project" value="UniProtKB-UniRule"/>
</dbReference>
<dbReference type="GO" id="GO:0004822">
    <property type="term" value="F:isoleucine-tRNA ligase activity"/>
    <property type="evidence" value="ECO:0007669"/>
    <property type="project" value="UniProtKB-UniRule"/>
</dbReference>
<dbReference type="GO" id="GO:0000049">
    <property type="term" value="F:tRNA binding"/>
    <property type="evidence" value="ECO:0007669"/>
    <property type="project" value="InterPro"/>
</dbReference>
<dbReference type="GO" id="GO:0008270">
    <property type="term" value="F:zinc ion binding"/>
    <property type="evidence" value="ECO:0007669"/>
    <property type="project" value="UniProtKB-UniRule"/>
</dbReference>
<dbReference type="GO" id="GO:0006428">
    <property type="term" value="P:isoleucyl-tRNA aminoacylation"/>
    <property type="evidence" value="ECO:0007669"/>
    <property type="project" value="UniProtKB-UniRule"/>
</dbReference>
<dbReference type="CDD" id="cd07961">
    <property type="entry name" value="Anticodon_Ia_Ile_ABEc"/>
    <property type="match status" value="1"/>
</dbReference>
<dbReference type="CDD" id="cd00818">
    <property type="entry name" value="IleRS_core"/>
    <property type="match status" value="1"/>
</dbReference>
<dbReference type="FunFam" id="3.40.50.620:FF:000063">
    <property type="entry name" value="Isoleucine--tRNA ligase"/>
    <property type="match status" value="1"/>
</dbReference>
<dbReference type="FunFam" id="3.40.50.620:FF:000075">
    <property type="entry name" value="Isoleucine--tRNA ligase"/>
    <property type="match status" value="1"/>
</dbReference>
<dbReference type="Gene3D" id="3.40.50.620">
    <property type="entry name" value="HUPs"/>
    <property type="match status" value="2"/>
</dbReference>
<dbReference type="Gene3D" id="1.10.730.10">
    <property type="entry name" value="Isoleucyl-tRNA Synthetase, Domain 1"/>
    <property type="match status" value="1"/>
</dbReference>
<dbReference type="HAMAP" id="MF_02003">
    <property type="entry name" value="Ile_tRNA_synth_type2"/>
    <property type="match status" value="1"/>
</dbReference>
<dbReference type="InterPro" id="IPR002300">
    <property type="entry name" value="aa-tRNA-synth_Ia"/>
</dbReference>
<dbReference type="InterPro" id="IPR033709">
    <property type="entry name" value="Anticodon_Ile_ABEc"/>
</dbReference>
<dbReference type="InterPro" id="IPR002301">
    <property type="entry name" value="Ile-tRNA-ligase"/>
</dbReference>
<dbReference type="InterPro" id="IPR023586">
    <property type="entry name" value="Ile-tRNA-ligase_type2"/>
</dbReference>
<dbReference type="InterPro" id="IPR013155">
    <property type="entry name" value="M/V/L/I-tRNA-synth_anticd-bd"/>
</dbReference>
<dbReference type="InterPro" id="IPR014729">
    <property type="entry name" value="Rossmann-like_a/b/a_fold"/>
</dbReference>
<dbReference type="InterPro" id="IPR009080">
    <property type="entry name" value="tRNAsynth_Ia_anticodon-bd"/>
</dbReference>
<dbReference type="InterPro" id="IPR009008">
    <property type="entry name" value="Val/Leu/Ile-tRNA-synth_edit"/>
</dbReference>
<dbReference type="NCBIfam" id="TIGR00392">
    <property type="entry name" value="ileS"/>
    <property type="match status" value="1"/>
</dbReference>
<dbReference type="PANTHER" id="PTHR42780:SF1">
    <property type="entry name" value="ISOLEUCINE--TRNA LIGASE, CYTOPLASMIC"/>
    <property type="match status" value="1"/>
</dbReference>
<dbReference type="PANTHER" id="PTHR42780">
    <property type="entry name" value="SOLEUCYL-TRNA SYNTHETASE"/>
    <property type="match status" value="1"/>
</dbReference>
<dbReference type="Pfam" id="PF08264">
    <property type="entry name" value="Anticodon_1"/>
    <property type="match status" value="1"/>
</dbReference>
<dbReference type="Pfam" id="PF19302">
    <property type="entry name" value="DUF5915"/>
    <property type="match status" value="1"/>
</dbReference>
<dbReference type="Pfam" id="PF00133">
    <property type="entry name" value="tRNA-synt_1"/>
    <property type="match status" value="1"/>
</dbReference>
<dbReference type="PRINTS" id="PR00984">
    <property type="entry name" value="TRNASYNTHILE"/>
</dbReference>
<dbReference type="SUPFAM" id="SSF47323">
    <property type="entry name" value="Anticodon-binding domain of a subclass of class I aminoacyl-tRNA synthetases"/>
    <property type="match status" value="1"/>
</dbReference>
<dbReference type="SUPFAM" id="SSF52374">
    <property type="entry name" value="Nucleotidylyl transferase"/>
    <property type="match status" value="1"/>
</dbReference>
<dbReference type="SUPFAM" id="SSF50677">
    <property type="entry name" value="ValRS/IleRS/LeuRS editing domain"/>
    <property type="match status" value="1"/>
</dbReference>
<accession>Q3Z7P5</accession>
<protein>
    <recommendedName>
        <fullName evidence="1">Isoleucine--tRNA ligase</fullName>
        <ecNumber evidence="1">6.1.1.5</ecNumber>
    </recommendedName>
    <alternativeName>
        <fullName evidence="1">Isoleucyl-tRNA synthetase</fullName>
        <shortName evidence="1">IleRS</shortName>
    </alternativeName>
</protein>
<name>SYI_DEHM1</name>
<evidence type="ECO:0000255" key="1">
    <source>
        <dbReference type="HAMAP-Rule" id="MF_02003"/>
    </source>
</evidence>
<proteinExistence type="inferred from homology"/>
<gene>
    <name evidence="1" type="primary">ileS</name>
    <name type="ordered locus">DET1038</name>
</gene>
<feature type="chain" id="PRO_0000098540" description="Isoleucine--tRNA ligase">
    <location>
        <begin position="1"/>
        <end position="1014"/>
    </location>
</feature>
<feature type="short sequence motif" description="'HIGH' region">
    <location>
        <begin position="48"/>
        <end position="58"/>
    </location>
</feature>
<feature type="short sequence motif" description="'KMSKS' region">
    <location>
        <begin position="628"/>
        <end position="632"/>
    </location>
</feature>
<feature type="binding site" evidence="1">
    <location>
        <position position="631"/>
    </location>
    <ligand>
        <name>ATP</name>
        <dbReference type="ChEBI" id="CHEBI:30616"/>
    </ligand>
</feature>
<keyword id="KW-0030">Aminoacyl-tRNA synthetase</keyword>
<keyword id="KW-0067">ATP-binding</keyword>
<keyword id="KW-0963">Cytoplasm</keyword>
<keyword id="KW-0436">Ligase</keyword>
<keyword id="KW-0479">Metal-binding</keyword>
<keyword id="KW-0547">Nucleotide-binding</keyword>
<keyword id="KW-0648">Protein biosynthesis</keyword>
<keyword id="KW-0862">Zinc</keyword>
<organism>
    <name type="scientific">Dehalococcoides mccartyi (strain ATCC BAA-2266 / KCTC 15142 / 195)</name>
    <name type="common">Dehalococcoides ethenogenes (strain 195)</name>
    <dbReference type="NCBI Taxonomy" id="243164"/>
    <lineage>
        <taxon>Bacteria</taxon>
        <taxon>Bacillati</taxon>
        <taxon>Chloroflexota</taxon>
        <taxon>Dehalococcoidia</taxon>
        <taxon>Dehalococcoidales</taxon>
        <taxon>Dehalococcoidaceae</taxon>
        <taxon>Dehalococcoides</taxon>
    </lineage>
</organism>